<accession>Q2FJD9</accession>
<protein>
    <recommendedName>
        <fullName evidence="1">Peptidyl-tRNA hydrolase</fullName>
        <shortName evidence="1">Pth</shortName>
        <ecNumber evidence="1">3.1.1.29</ecNumber>
    </recommendedName>
</protein>
<feature type="chain" id="PRO_0000264114" description="Peptidyl-tRNA hydrolase">
    <location>
        <begin position="1"/>
        <end position="190"/>
    </location>
</feature>
<feature type="active site" description="Proton acceptor" evidence="1">
    <location>
        <position position="19"/>
    </location>
</feature>
<feature type="binding site" evidence="1">
    <location>
        <position position="14"/>
    </location>
    <ligand>
        <name>tRNA</name>
        <dbReference type="ChEBI" id="CHEBI:17843"/>
    </ligand>
</feature>
<feature type="binding site" evidence="1">
    <location>
        <position position="64"/>
    </location>
    <ligand>
        <name>tRNA</name>
        <dbReference type="ChEBI" id="CHEBI:17843"/>
    </ligand>
</feature>
<feature type="binding site" evidence="1">
    <location>
        <position position="66"/>
    </location>
    <ligand>
        <name>tRNA</name>
        <dbReference type="ChEBI" id="CHEBI:17843"/>
    </ligand>
</feature>
<feature type="binding site" evidence="1">
    <location>
        <position position="112"/>
    </location>
    <ligand>
        <name>tRNA</name>
        <dbReference type="ChEBI" id="CHEBI:17843"/>
    </ligand>
</feature>
<feature type="site" description="Discriminates between blocked and unblocked aminoacyl-tRNA" evidence="1">
    <location>
        <position position="9"/>
    </location>
</feature>
<feature type="site" description="Stabilizes the basic form of H active site to accept a proton" evidence="1">
    <location>
        <position position="91"/>
    </location>
</feature>
<comment type="function">
    <text evidence="1">Hydrolyzes ribosome-free peptidyl-tRNAs (with 1 or more amino acids incorporated), which drop off the ribosome during protein synthesis, or as a result of ribosome stalling.</text>
</comment>
<comment type="function">
    <text evidence="1">Catalyzes the release of premature peptidyl moieties from peptidyl-tRNA molecules trapped in stalled 50S ribosomal subunits, and thus maintains levels of free tRNAs and 50S ribosomes.</text>
</comment>
<comment type="catalytic activity">
    <reaction evidence="1">
        <text>an N-acyl-L-alpha-aminoacyl-tRNA + H2O = an N-acyl-L-amino acid + a tRNA + H(+)</text>
        <dbReference type="Rhea" id="RHEA:54448"/>
        <dbReference type="Rhea" id="RHEA-COMP:10123"/>
        <dbReference type="Rhea" id="RHEA-COMP:13883"/>
        <dbReference type="ChEBI" id="CHEBI:15377"/>
        <dbReference type="ChEBI" id="CHEBI:15378"/>
        <dbReference type="ChEBI" id="CHEBI:59874"/>
        <dbReference type="ChEBI" id="CHEBI:78442"/>
        <dbReference type="ChEBI" id="CHEBI:138191"/>
        <dbReference type="EC" id="3.1.1.29"/>
    </reaction>
</comment>
<comment type="subunit">
    <text evidence="1">Monomer.</text>
</comment>
<comment type="subcellular location">
    <subcellularLocation>
        <location evidence="1">Cytoplasm</location>
    </subcellularLocation>
</comment>
<comment type="similarity">
    <text evidence="1">Belongs to the PTH family.</text>
</comment>
<dbReference type="EC" id="3.1.1.29" evidence="1"/>
<dbReference type="EMBL" id="CP000255">
    <property type="protein sequence ID" value="ABD20575.1"/>
    <property type="molecule type" value="Genomic_DNA"/>
</dbReference>
<dbReference type="RefSeq" id="WP_000649791.1">
    <property type="nucleotide sequence ID" value="NZ_CP027476.1"/>
</dbReference>
<dbReference type="SMR" id="Q2FJD9"/>
<dbReference type="KEGG" id="saa:SAUSA300_0480"/>
<dbReference type="HOGENOM" id="CLU_062456_4_1_9"/>
<dbReference type="OMA" id="PNTYMNL"/>
<dbReference type="Proteomes" id="UP000001939">
    <property type="component" value="Chromosome"/>
</dbReference>
<dbReference type="GO" id="GO:0005737">
    <property type="term" value="C:cytoplasm"/>
    <property type="evidence" value="ECO:0007669"/>
    <property type="project" value="UniProtKB-SubCell"/>
</dbReference>
<dbReference type="GO" id="GO:0004045">
    <property type="term" value="F:peptidyl-tRNA hydrolase activity"/>
    <property type="evidence" value="ECO:0007669"/>
    <property type="project" value="UniProtKB-UniRule"/>
</dbReference>
<dbReference type="GO" id="GO:0000049">
    <property type="term" value="F:tRNA binding"/>
    <property type="evidence" value="ECO:0007669"/>
    <property type="project" value="UniProtKB-UniRule"/>
</dbReference>
<dbReference type="GO" id="GO:0006515">
    <property type="term" value="P:protein quality control for misfolded or incompletely synthesized proteins"/>
    <property type="evidence" value="ECO:0007669"/>
    <property type="project" value="UniProtKB-UniRule"/>
</dbReference>
<dbReference type="GO" id="GO:0072344">
    <property type="term" value="P:rescue of stalled ribosome"/>
    <property type="evidence" value="ECO:0007669"/>
    <property type="project" value="UniProtKB-UniRule"/>
</dbReference>
<dbReference type="CDD" id="cd00462">
    <property type="entry name" value="PTH"/>
    <property type="match status" value="1"/>
</dbReference>
<dbReference type="FunFam" id="3.40.50.1470:FF:000001">
    <property type="entry name" value="Peptidyl-tRNA hydrolase"/>
    <property type="match status" value="1"/>
</dbReference>
<dbReference type="Gene3D" id="3.40.50.1470">
    <property type="entry name" value="Peptidyl-tRNA hydrolase"/>
    <property type="match status" value="1"/>
</dbReference>
<dbReference type="HAMAP" id="MF_00083">
    <property type="entry name" value="Pept_tRNA_hydro_bact"/>
    <property type="match status" value="1"/>
</dbReference>
<dbReference type="InterPro" id="IPR001328">
    <property type="entry name" value="Pept_tRNA_hydro"/>
</dbReference>
<dbReference type="InterPro" id="IPR018171">
    <property type="entry name" value="Pept_tRNA_hydro_CS"/>
</dbReference>
<dbReference type="InterPro" id="IPR036416">
    <property type="entry name" value="Pept_tRNA_hydro_sf"/>
</dbReference>
<dbReference type="NCBIfam" id="TIGR00447">
    <property type="entry name" value="pth"/>
    <property type="match status" value="1"/>
</dbReference>
<dbReference type="PANTHER" id="PTHR17224">
    <property type="entry name" value="PEPTIDYL-TRNA HYDROLASE"/>
    <property type="match status" value="1"/>
</dbReference>
<dbReference type="PANTHER" id="PTHR17224:SF1">
    <property type="entry name" value="PEPTIDYL-TRNA HYDROLASE"/>
    <property type="match status" value="1"/>
</dbReference>
<dbReference type="Pfam" id="PF01195">
    <property type="entry name" value="Pept_tRNA_hydro"/>
    <property type="match status" value="1"/>
</dbReference>
<dbReference type="SUPFAM" id="SSF53178">
    <property type="entry name" value="Peptidyl-tRNA hydrolase-like"/>
    <property type="match status" value="1"/>
</dbReference>
<dbReference type="PROSITE" id="PS01195">
    <property type="entry name" value="PEPT_TRNA_HYDROL_1"/>
    <property type="match status" value="1"/>
</dbReference>
<dbReference type="PROSITE" id="PS01196">
    <property type="entry name" value="PEPT_TRNA_HYDROL_2"/>
    <property type="match status" value="1"/>
</dbReference>
<evidence type="ECO:0000255" key="1">
    <source>
        <dbReference type="HAMAP-Rule" id="MF_00083"/>
    </source>
</evidence>
<gene>
    <name evidence="1" type="primary">pth</name>
    <name type="ordered locus">SAUSA300_0480</name>
</gene>
<name>PTH_STAA3</name>
<sequence length="190" mass="21703">MKCIVGLGNIGKRFELTRHNIGFEVVDYILEKNNFSLDKQKFKGAYTIERMNGDKVLFIEPMTMMNLSGEAVAPIMDYYNVNPEDLIVLYDDLDLEQGQVRLRQKGSAGGHNGMKSIIKMLGTDQFKRIRIGVGRPTNGMTVPDYVLQRFSNDEMVTMEKVIEHAARAIEKFVETSRFDHVMNEFNGEVK</sequence>
<reference key="1">
    <citation type="journal article" date="2006" name="Lancet">
        <title>Complete genome sequence of USA300, an epidemic clone of community-acquired meticillin-resistant Staphylococcus aureus.</title>
        <authorList>
            <person name="Diep B.A."/>
            <person name="Gill S.R."/>
            <person name="Chang R.F."/>
            <person name="Phan T.H."/>
            <person name="Chen J.H."/>
            <person name="Davidson M.G."/>
            <person name="Lin F."/>
            <person name="Lin J."/>
            <person name="Carleton H.A."/>
            <person name="Mongodin E.F."/>
            <person name="Sensabaugh G.F."/>
            <person name="Perdreau-Remington F."/>
        </authorList>
    </citation>
    <scope>NUCLEOTIDE SEQUENCE [LARGE SCALE GENOMIC DNA]</scope>
    <source>
        <strain>USA300</strain>
    </source>
</reference>
<organism>
    <name type="scientific">Staphylococcus aureus (strain USA300)</name>
    <dbReference type="NCBI Taxonomy" id="367830"/>
    <lineage>
        <taxon>Bacteria</taxon>
        <taxon>Bacillati</taxon>
        <taxon>Bacillota</taxon>
        <taxon>Bacilli</taxon>
        <taxon>Bacillales</taxon>
        <taxon>Staphylococcaceae</taxon>
        <taxon>Staphylococcus</taxon>
    </lineage>
</organism>
<keyword id="KW-0963">Cytoplasm</keyword>
<keyword id="KW-0378">Hydrolase</keyword>
<keyword id="KW-0694">RNA-binding</keyword>
<keyword id="KW-0820">tRNA-binding</keyword>
<proteinExistence type="inferred from homology"/>